<gene>
    <name type="primary">yjjQ</name>
    <name type="ordered locus">Z5966</name>
    <name type="ordered locus">ECs5325</name>
</gene>
<proteinExistence type="predicted"/>
<organism>
    <name type="scientific">Escherichia coli O157:H7</name>
    <dbReference type="NCBI Taxonomy" id="83334"/>
    <lineage>
        <taxon>Bacteria</taxon>
        <taxon>Pseudomonadati</taxon>
        <taxon>Pseudomonadota</taxon>
        <taxon>Gammaproteobacteria</taxon>
        <taxon>Enterobacterales</taxon>
        <taxon>Enterobacteriaceae</taxon>
        <taxon>Escherichia</taxon>
    </lineage>
</organism>
<accession>P0ADD8</accession>
<accession>P39403</accession>
<sequence length="241" mass="27032">MLPGCCKNGIVISKIPVMQAGLKEVMRTHFPEYEIISSASAEDLTLLQLRRSGLVIADLAGESEDPRSVCEHYYSLISQYREIHWVFMVSRSWYSQAVELLMCPTATLLSDVEPIENLVKTVRSGNTHAERISAMLTSPAMTETHDFSYRSVILTLSERKVLRLLGKGWGINQIASLLKKSNKTISAQKNSAMRRLAIHSNAEMYAWINSAQGARELNLPSVYGDAAEWNTAELRREMSHS</sequence>
<keyword id="KW-0238">DNA-binding</keyword>
<keyword id="KW-1185">Reference proteome</keyword>
<feature type="chain" id="PRO_0000169815" description="Uncharacterized protein YjjQ">
    <location>
        <begin position="1"/>
        <end position="241"/>
    </location>
</feature>
<feature type="domain" description="HTH luxR-type" evidence="1">
    <location>
        <begin position="147"/>
        <end position="212"/>
    </location>
</feature>
<reference key="1">
    <citation type="journal article" date="2001" name="Nature">
        <title>Genome sequence of enterohaemorrhagic Escherichia coli O157:H7.</title>
        <authorList>
            <person name="Perna N.T."/>
            <person name="Plunkett G. III"/>
            <person name="Burland V."/>
            <person name="Mau B."/>
            <person name="Glasner J.D."/>
            <person name="Rose D.J."/>
            <person name="Mayhew G.F."/>
            <person name="Evans P.S."/>
            <person name="Gregor J."/>
            <person name="Kirkpatrick H.A."/>
            <person name="Posfai G."/>
            <person name="Hackett J."/>
            <person name="Klink S."/>
            <person name="Boutin A."/>
            <person name="Shao Y."/>
            <person name="Miller L."/>
            <person name="Grotbeck E.J."/>
            <person name="Davis N.W."/>
            <person name="Lim A."/>
            <person name="Dimalanta E.T."/>
            <person name="Potamousis K."/>
            <person name="Apodaca J."/>
            <person name="Anantharaman T.S."/>
            <person name="Lin J."/>
            <person name="Yen G."/>
            <person name="Schwartz D.C."/>
            <person name="Welch R.A."/>
            <person name="Blattner F.R."/>
        </authorList>
    </citation>
    <scope>NUCLEOTIDE SEQUENCE [LARGE SCALE GENOMIC DNA]</scope>
    <source>
        <strain>O157:H7 / EDL933 / ATCC 700927 / EHEC</strain>
    </source>
</reference>
<reference key="2">
    <citation type="journal article" date="2001" name="DNA Res.">
        <title>Complete genome sequence of enterohemorrhagic Escherichia coli O157:H7 and genomic comparison with a laboratory strain K-12.</title>
        <authorList>
            <person name="Hayashi T."/>
            <person name="Makino K."/>
            <person name="Ohnishi M."/>
            <person name="Kurokawa K."/>
            <person name="Ishii K."/>
            <person name="Yokoyama K."/>
            <person name="Han C.-G."/>
            <person name="Ohtsubo E."/>
            <person name="Nakayama K."/>
            <person name="Murata T."/>
            <person name="Tanaka M."/>
            <person name="Tobe T."/>
            <person name="Iida T."/>
            <person name="Takami H."/>
            <person name="Honda T."/>
            <person name="Sasakawa C."/>
            <person name="Ogasawara N."/>
            <person name="Yasunaga T."/>
            <person name="Kuhara S."/>
            <person name="Shiba T."/>
            <person name="Hattori M."/>
            <person name="Shinagawa H."/>
        </authorList>
    </citation>
    <scope>NUCLEOTIDE SEQUENCE [LARGE SCALE GENOMIC DNA]</scope>
    <source>
        <strain>O157:H7 / Sakai / RIMD 0509952 / EHEC</strain>
    </source>
</reference>
<dbReference type="EMBL" id="AE005174">
    <property type="protein sequence ID" value="AAG59548.1"/>
    <property type="molecule type" value="Genomic_DNA"/>
</dbReference>
<dbReference type="EMBL" id="BA000007">
    <property type="protein sequence ID" value="BAB38748.1"/>
    <property type="molecule type" value="Genomic_DNA"/>
</dbReference>
<dbReference type="PIR" id="E91294">
    <property type="entry name" value="E91294"/>
</dbReference>
<dbReference type="PIR" id="H86135">
    <property type="entry name" value="H86135"/>
</dbReference>
<dbReference type="RefSeq" id="NP_313352.1">
    <property type="nucleotide sequence ID" value="NC_002695.1"/>
</dbReference>
<dbReference type="RefSeq" id="WP_000936635.1">
    <property type="nucleotide sequence ID" value="NZ_VOAI01000002.1"/>
</dbReference>
<dbReference type="SMR" id="P0ADD8"/>
<dbReference type="STRING" id="155864.Z5966"/>
<dbReference type="GeneID" id="913573"/>
<dbReference type="KEGG" id="ece:Z5966"/>
<dbReference type="KEGG" id="ecs:ECs_5325"/>
<dbReference type="PATRIC" id="fig|386585.9.peg.5569"/>
<dbReference type="eggNOG" id="COG2197">
    <property type="taxonomic scope" value="Bacteria"/>
</dbReference>
<dbReference type="HOGENOM" id="CLU_086951_0_0_6"/>
<dbReference type="OMA" id="DYELSFC"/>
<dbReference type="Proteomes" id="UP000000558">
    <property type="component" value="Chromosome"/>
</dbReference>
<dbReference type="Proteomes" id="UP000002519">
    <property type="component" value="Chromosome"/>
</dbReference>
<dbReference type="GO" id="GO:0003677">
    <property type="term" value="F:DNA binding"/>
    <property type="evidence" value="ECO:0007669"/>
    <property type="project" value="UniProtKB-KW"/>
</dbReference>
<dbReference type="GO" id="GO:0006355">
    <property type="term" value="P:regulation of DNA-templated transcription"/>
    <property type="evidence" value="ECO:0007669"/>
    <property type="project" value="InterPro"/>
</dbReference>
<dbReference type="CDD" id="cd06170">
    <property type="entry name" value="LuxR_C_like"/>
    <property type="match status" value="1"/>
</dbReference>
<dbReference type="FunFam" id="1.10.10.10:FF:000324">
    <property type="entry name" value="LuxR family transcriptional regulator"/>
    <property type="match status" value="1"/>
</dbReference>
<dbReference type="Gene3D" id="1.10.10.10">
    <property type="entry name" value="Winged helix-like DNA-binding domain superfamily/Winged helix DNA-binding domain"/>
    <property type="match status" value="1"/>
</dbReference>
<dbReference type="InterPro" id="IPR016032">
    <property type="entry name" value="Sig_transdc_resp-reg_C-effctor"/>
</dbReference>
<dbReference type="InterPro" id="IPR000792">
    <property type="entry name" value="Tscrpt_reg_LuxR_C"/>
</dbReference>
<dbReference type="InterPro" id="IPR039420">
    <property type="entry name" value="WalR-like"/>
</dbReference>
<dbReference type="InterPro" id="IPR036388">
    <property type="entry name" value="WH-like_DNA-bd_sf"/>
</dbReference>
<dbReference type="PANTHER" id="PTHR43214:SF30">
    <property type="entry name" value="TRANSCRIPTION FACTOR YJJQ-RELATED"/>
    <property type="match status" value="1"/>
</dbReference>
<dbReference type="PANTHER" id="PTHR43214">
    <property type="entry name" value="TWO-COMPONENT RESPONSE REGULATOR"/>
    <property type="match status" value="1"/>
</dbReference>
<dbReference type="Pfam" id="PF00196">
    <property type="entry name" value="GerE"/>
    <property type="match status" value="1"/>
</dbReference>
<dbReference type="SMART" id="SM00421">
    <property type="entry name" value="HTH_LUXR"/>
    <property type="match status" value="1"/>
</dbReference>
<dbReference type="SUPFAM" id="SSF46894">
    <property type="entry name" value="C-terminal effector domain of the bipartite response regulators"/>
    <property type="match status" value="1"/>
</dbReference>
<dbReference type="PROSITE" id="PS50043">
    <property type="entry name" value="HTH_LUXR_2"/>
    <property type="match status" value="1"/>
</dbReference>
<protein>
    <recommendedName>
        <fullName>Uncharacterized protein YjjQ</fullName>
    </recommendedName>
</protein>
<name>YJJQ_ECO57</name>
<evidence type="ECO:0000255" key="1">
    <source>
        <dbReference type="PROSITE-ProRule" id="PRU00411"/>
    </source>
</evidence>